<accession>A6UP44</accession>
<feature type="chain" id="PRO_1000023226" description="Probable thymidylate kinase">
    <location>
        <begin position="1"/>
        <end position="198"/>
    </location>
</feature>
<feature type="binding site" evidence="1">
    <location>
        <begin position="9"/>
        <end position="16"/>
    </location>
    <ligand>
        <name>ATP</name>
        <dbReference type="ChEBI" id="CHEBI:30616"/>
    </ligand>
</feature>
<comment type="catalytic activity">
    <reaction evidence="1">
        <text>dTMP + ATP = dTDP + ADP</text>
        <dbReference type="Rhea" id="RHEA:13517"/>
        <dbReference type="ChEBI" id="CHEBI:30616"/>
        <dbReference type="ChEBI" id="CHEBI:58369"/>
        <dbReference type="ChEBI" id="CHEBI:63528"/>
        <dbReference type="ChEBI" id="CHEBI:456216"/>
        <dbReference type="EC" id="2.7.4.9"/>
    </reaction>
</comment>
<comment type="similarity">
    <text evidence="1">Belongs to the thymidylate kinase family.</text>
</comment>
<organism>
    <name type="scientific">Methanococcus vannielii (strain ATCC 35089 / DSM 1224 / JCM 13029 / OCM 148 / SB)</name>
    <dbReference type="NCBI Taxonomy" id="406327"/>
    <lineage>
        <taxon>Archaea</taxon>
        <taxon>Methanobacteriati</taxon>
        <taxon>Methanobacteriota</taxon>
        <taxon>Methanomada group</taxon>
        <taxon>Methanococci</taxon>
        <taxon>Methanococcales</taxon>
        <taxon>Methanococcaceae</taxon>
        <taxon>Methanococcus</taxon>
    </lineage>
</organism>
<keyword id="KW-0067">ATP-binding</keyword>
<keyword id="KW-0418">Kinase</keyword>
<keyword id="KW-0545">Nucleotide biosynthesis</keyword>
<keyword id="KW-0547">Nucleotide-binding</keyword>
<keyword id="KW-0808">Transferase</keyword>
<name>KTHY_METVS</name>
<protein>
    <recommendedName>
        <fullName evidence="1">Probable thymidylate kinase</fullName>
        <ecNumber evidence="1">2.7.4.9</ecNumber>
    </recommendedName>
    <alternativeName>
        <fullName evidence="1">dTMP kinase</fullName>
    </alternativeName>
</protein>
<sequence length="198" mass="22888">MNKFIVFEGIDGSGKTTQAKMLAEKLNAEYTCEPTTGKIGRTIREVLSGSECKKETLALLFAADRVEHVSEIEKMLQKSHVVTDRYVYSSIIYQTMQGISKEFIYSINFFAKIPDIVVILDVDTEEALKRMEFREKEIFEKIEFQKKIKQEYHKIAELKCSKFEPTYGFVMVNTTGKTPEEVFNELFNKILDKIPDII</sequence>
<proteinExistence type="inferred from homology"/>
<gene>
    <name evidence="1" type="primary">tmk</name>
    <name type="ordered locus">Mevan_0357</name>
</gene>
<evidence type="ECO:0000255" key="1">
    <source>
        <dbReference type="HAMAP-Rule" id="MF_00165"/>
    </source>
</evidence>
<dbReference type="EC" id="2.7.4.9" evidence="1"/>
<dbReference type="EMBL" id="CP000742">
    <property type="protein sequence ID" value="ABR54266.1"/>
    <property type="molecule type" value="Genomic_DNA"/>
</dbReference>
<dbReference type="RefSeq" id="WP_011972169.1">
    <property type="nucleotide sequence ID" value="NC_009634.1"/>
</dbReference>
<dbReference type="SMR" id="A6UP44"/>
<dbReference type="STRING" id="406327.Mevan_0357"/>
<dbReference type="GeneID" id="5325817"/>
<dbReference type="KEGG" id="mvn:Mevan_0357"/>
<dbReference type="eggNOG" id="arCOG01891">
    <property type="taxonomic scope" value="Archaea"/>
</dbReference>
<dbReference type="HOGENOM" id="CLU_049131_0_2_2"/>
<dbReference type="OrthoDB" id="43083at2157"/>
<dbReference type="Proteomes" id="UP000001107">
    <property type="component" value="Chromosome"/>
</dbReference>
<dbReference type="GO" id="GO:0005737">
    <property type="term" value="C:cytoplasm"/>
    <property type="evidence" value="ECO:0007669"/>
    <property type="project" value="TreeGrafter"/>
</dbReference>
<dbReference type="GO" id="GO:0005524">
    <property type="term" value="F:ATP binding"/>
    <property type="evidence" value="ECO:0007669"/>
    <property type="project" value="UniProtKB-UniRule"/>
</dbReference>
<dbReference type="GO" id="GO:0004798">
    <property type="term" value="F:dTMP kinase activity"/>
    <property type="evidence" value="ECO:0007669"/>
    <property type="project" value="UniProtKB-UniRule"/>
</dbReference>
<dbReference type="GO" id="GO:0006233">
    <property type="term" value="P:dTDP biosynthetic process"/>
    <property type="evidence" value="ECO:0007669"/>
    <property type="project" value="InterPro"/>
</dbReference>
<dbReference type="GO" id="GO:0006235">
    <property type="term" value="P:dTTP biosynthetic process"/>
    <property type="evidence" value="ECO:0007669"/>
    <property type="project" value="UniProtKB-UniRule"/>
</dbReference>
<dbReference type="GO" id="GO:0006227">
    <property type="term" value="P:dUDP biosynthetic process"/>
    <property type="evidence" value="ECO:0007669"/>
    <property type="project" value="TreeGrafter"/>
</dbReference>
<dbReference type="CDD" id="cd01672">
    <property type="entry name" value="TMPK"/>
    <property type="match status" value="1"/>
</dbReference>
<dbReference type="Gene3D" id="3.40.50.300">
    <property type="entry name" value="P-loop containing nucleotide triphosphate hydrolases"/>
    <property type="match status" value="1"/>
</dbReference>
<dbReference type="HAMAP" id="MF_00165">
    <property type="entry name" value="Thymidylate_kinase"/>
    <property type="match status" value="1"/>
</dbReference>
<dbReference type="InterPro" id="IPR027417">
    <property type="entry name" value="P-loop_NTPase"/>
</dbReference>
<dbReference type="InterPro" id="IPR039430">
    <property type="entry name" value="Thymidylate_kin-like_dom"/>
</dbReference>
<dbReference type="InterPro" id="IPR018094">
    <property type="entry name" value="Thymidylate_kinase"/>
</dbReference>
<dbReference type="NCBIfam" id="TIGR00041">
    <property type="entry name" value="DTMP_kinase"/>
    <property type="match status" value="1"/>
</dbReference>
<dbReference type="PANTHER" id="PTHR10344">
    <property type="entry name" value="THYMIDYLATE KINASE"/>
    <property type="match status" value="1"/>
</dbReference>
<dbReference type="PANTHER" id="PTHR10344:SF4">
    <property type="entry name" value="UMP-CMP KINASE 2, MITOCHONDRIAL"/>
    <property type="match status" value="1"/>
</dbReference>
<dbReference type="Pfam" id="PF02223">
    <property type="entry name" value="Thymidylate_kin"/>
    <property type="match status" value="1"/>
</dbReference>
<dbReference type="SUPFAM" id="SSF52540">
    <property type="entry name" value="P-loop containing nucleoside triphosphate hydrolases"/>
    <property type="match status" value="1"/>
</dbReference>
<reference key="1">
    <citation type="submission" date="2007-06" db="EMBL/GenBank/DDBJ databases">
        <title>Complete sequence of Methanococcus vannielii SB.</title>
        <authorList>
            <consortium name="US DOE Joint Genome Institute"/>
            <person name="Copeland A."/>
            <person name="Lucas S."/>
            <person name="Lapidus A."/>
            <person name="Barry K."/>
            <person name="Glavina del Rio T."/>
            <person name="Dalin E."/>
            <person name="Tice H."/>
            <person name="Pitluck S."/>
            <person name="Chain P."/>
            <person name="Malfatti S."/>
            <person name="Shin M."/>
            <person name="Vergez L."/>
            <person name="Schmutz J."/>
            <person name="Larimer F."/>
            <person name="Land M."/>
            <person name="Hauser L."/>
            <person name="Kyrpides N."/>
            <person name="Anderson I."/>
            <person name="Sieprawska-Lupa M."/>
            <person name="Whitman W.B."/>
            <person name="Richardson P."/>
        </authorList>
    </citation>
    <scope>NUCLEOTIDE SEQUENCE [LARGE SCALE GENOMIC DNA]</scope>
    <source>
        <strain>ATCC 35089 / DSM 1224 / JCM 13029 / OCM 148 / SB</strain>
    </source>
</reference>